<feature type="chain" id="PRO_0000124890" description="Large ribosomal subunit protein uL5">
    <location>
        <begin position="1"/>
        <end position="179"/>
    </location>
</feature>
<accession>Q9Z9K2</accession>
<accession>Q9JPX5</accession>
<comment type="function">
    <text evidence="1">This is one of the proteins that bind and probably mediate the attachment of the 5S RNA into the large ribosomal subunit, where it forms part of the central protuberance. In the 70S ribosome it contacts protein S13 of the 30S subunit (bridge B1b), connecting the 2 subunits; this bridge is implicated in subunit movement. Contacts the P site tRNA; the 5S rRNA and some of its associated proteins might help stabilize positioning of ribosome-bound tRNAs.</text>
</comment>
<comment type="subunit">
    <text evidence="1">Part of the 50S ribosomal subunit; part of the 5S rRNA/L5/L18/L25 subcomplex. Contacts the 5S rRNA and the P site tRNA. Forms a bridge to the 30S subunit in the 70S ribosome.</text>
</comment>
<comment type="similarity">
    <text evidence="1">Belongs to the universal ribosomal protein uL5 family.</text>
</comment>
<evidence type="ECO:0000255" key="1">
    <source>
        <dbReference type="HAMAP-Rule" id="MF_01333"/>
    </source>
</evidence>
<evidence type="ECO:0000305" key="2"/>
<organism>
    <name type="scientific">Halalkalibacterium halodurans (strain ATCC BAA-125 / DSM 18197 / FERM 7344 / JCM 9153 / C-125)</name>
    <name type="common">Bacillus halodurans</name>
    <dbReference type="NCBI Taxonomy" id="272558"/>
    <lineage>
        <taxon>Bacteria</taxon>
        <taxon>Bacillati</taxon>
        <taxon>Bacillota</taxon>
        <taxon>Bacilli</taxon>
        <taxon>Bacillales</taxon>
        <taxon>Bacillaceae</taxon>
        <taxon>Halalkalibacterium (ex Joshi et al. 2022)</taxon>
    </lineage>
</organism>
<proteinExistence type="inferred from homology"/>
<dbReference type="EMBL" id="AB017508">
    <property type="protein sequence ID" value="BAA75283.1"/>
    <property type="molecule type" value="Genomic_DNA"/>
</dbReference>
<dbReference type="EMBL" id="BA000004">
    <property type="protein sequence ID" value="BAB03865.1"/>
    <property type="molecule type" value="Genomic_DNA"/>
</dbReference>
<dbReference type="PIR" id="T44395">
    <property type="entry name" value="T44395"/>
</dbReference>
<dbReference type="RefSeq" id="WP_010896329.1">
    <property type="nucleotide sequence ID" value="NC_002570.2"/>
</dbReference>
<dbReference type="SMR" id="Q9Z9K2"/>
<dbReference type="STRING" id="272558.gene:10725986"/>
<dbReference type="GeneID" id="87595687"/>
<dbReference type="KEGG" id="bha:BH0146"/>
<dbReference type="eggNOG" id="COG0094">
    <property type="taxonomic scope" value="Bacteria"/>
</dbReference>
<dbReference type="HOGENOM" id="CLU_061015_2_1_9"/>
<dbReference type="OrthoDB" id="9806626at2"/>
<dbReference type="Proteomes" id="UP000001258">
    <property type="component" value="Chromosome"/>
</dbReference>
<dbReference type="GO" id="GO:1990904">
    <property type="term" value="C:ribonucleoprotein complex"/>
    <property type="evidence" value="ECO:0007669"/>
    <property type="project" value="UniProtKB-KW"/>
</dbReference>
<dbReference type="GO" id="GO:0005840">
    <property type="term" value="C:ribosome"/>
    <property type="evidence" value="ECO:0007669"/>
    <property type="project" value="UniProtKB-KW"/>
</dbReference>
<dbReference type="GO" id="GO:0019843">
    <property type="term" value="F:rRNA binding"/>
    <property type="evidence" value="ECO:0007669"/>
    <property type="project" value="UniProtKB-UniRule"/>
</dbReference>
<dbReference type="GO" id="GO:0003735">
    <property type="term" value="F:structural constituent of ribosome"/>
    <property type="evidence" value="ECO:0007669"/>
    <property type="project" value="InterPro"/>
</dbReference>
<dbReference type="GO" id="GO:0000049">
    <property type="term" value="F:tRNA binding"/>
    <property type="evidence" value="ECO:0007669"/>
    <property type="project" value="UniProtKB-UniRule"/>
</dbReference>
<dbReference type="GO" id="GO:0006412">
    <property type="term" value="P:translation"/>
    <property type="evidence" value="ECO:0007669"/>
    <property type="project" value="UniProtKB-UniRule"/>
</dbReference>
<dbReference type="FunFam" id="3.30.1440.10:FF:000001">
    <property type="entry name" value="50S ribosomal protein L5"/>
    <property type="match status" value="1"/>
</dbReference>
<dbReference type="Gene3D" id="3.30.1440.10">
    <property type="match status" value="1"/>
</dbReference>
<dbReference type="HAMAP" id="MF_01333_B">
    <property type="entry name" value="Ribosomal_uL5_B"/>
    <property type="match status" value="1"/>
</dbReference>
<dbReference type="InterPro" id="IPR002132">
    <property type="entry name" value="Ribosomal_uL5"/>
</dbReference>
<dbReference type="InterPro" id="IPR020930">
    <property type="entry name" value="Ribosomal_uL5_bac-type"/>
</dbReference>
<dbReference type="InterPro" id="IPR031309">
    <property type="entry name" value="Ribosomal_uL5_C"/>
</dbReference>
<dbReference type="InterPro" id="IPR020929">
    <property type="entry name" value="Ribosomal_uL5_CS"/>
</dbReference>
<dbReference type="InterPro" id="IPR022803">
    <property type="entry name" value="Ribosomal_uL5_dom_sf"/>
</dbReference>
<dbReference type="InterPro" id="IPR031310">
    <property type="entry name" value="Ribosomal_uL5_N"/>
</dbReference>
<dbReference type="NCBIfam" id="NF000585">
    <property type="entry name" value="PRK00010.1"/>
    <property type="match status" value="1"/>
</dbReference>
<dbReference type="PANTHER" id="PTHR11994">
    <property type="entry name" value="60S RIBOSOMAL PROTEIN L11-RELATED"/>
    <property type="match status" value="1"/>
</dbReference>
<dbReference type="Pfam" id="PF00281">
    <property type="entry name" value="Ribosomal_L5"/>
    <property type="match status" value="1"/>
</dbReference>
<dbReference type="Pfam" id="PF00673">
    <property type="entry name" value="Ribosomal_L5_C"/>
    <property type="match status" value="1"/>
</dbReference>
<dbReference type="PIRSF" id="PIRSF002161">
    <property type="entry name" value="Ribosomal_L5"/>
    <property type="match status" value="1"/>
</dbReference>
<dbReference type="SUPFAM" id="SSF55282">
    <property type="entry name" value="RL5-like"/>
    <property type="match status" value="1"/>
</dbReference>
<dbReference type="PROSITE" id="PS00358">
    <property type="entry name" value="RIBOSOMAL_L5"/>
    <property type="match status" value="1"/>
</dbReference>
<reference key="1">
    <citation type="journal article" date="1999" name="Biosci. Biotechnol. Biochem.">
        <title>Sequence analysis of a 32-kb region including the major ribosomal protein gene clusters from alkaliphilic Bacillus sp. strain C-125.</title>
        <authorList>
            <person name="Takami H."/>
            <person name="Takaki Y."/>
            <person name="Nakasone K."/>
            <person name="Hirama C."/>
            <person name="Inoue A."/>
            <person name="Horikoshi K."/>
        </authorList>
    </citation>
    <scope>NUCLEOTIDE SEQUENCE [GENOMIC DNA]</scope>
    <source>
        <strain>ATCC BAA-125 / DSM 18197 / FERM 7344 / JCM 9153 / C-125</strain>
    </source>
</reference>
<reference key="2">
    <citation type="journal article" date="2000" name="Nucleic Acids Res.">
        <title>Complete genome sequence of the alkaliphilic bacterium Bacillus halodurans and genomic sequence comparison with Bacillus subtilis.</title>
        <authorList>
            <person name="Takami H."/>
            <person name="Nakasone K."/>
            <person name="Takaki Y."/>
            <person name="Maeno G."/>
            <person name="Sasaki R."/>
            <person name="Masui N."/>
            <person name="Fuji F."/>
            <person name="Hirama C."/>
            <person name="Nakamura Y."/>
            <person name="Ogasawara N."/>
            <person name="Kuhara S."/>
            <person name="Horikoshi K."/>
        </authorList>
    </citation>
    <scope>NUCLEOTIDE SEQUENCE [LARGE SCALE GENOMIC DNA]</scope>
    <source>
        <strain>ATCC BAA-125 / DSM 18197 / FERM 7344 / JCM 9153 / C-125</strain>
    </source>
</reference>
<protein>
    <recommendedName>
        <fullName evidence="1">Large ribosomal subunit protein uL5</fullName>
    </recommendedName>
    <alternativeName>
        <fullName evidence="2">50S ribosomal protein L5</fullName>
    </alternativeName>
</protein>
<keyword id="KW-1185">Reference proteome</keyword>
<keyword id="KW-0687">Ribonucleoprotein</keyword>
<keyword id="KW-0689">Ribosomal protein</keyword>
<keyword id="KW-0694">RNA-binding</keyword>
<keyword id="KW-0699">rRNA-binding</keyword>
<keyword id="KW-0820">tRNA-binding</keyword>
<name>RL5_HALH5</name>
<gene>
    <name evidence="1" type="primary">rplE</name>
    <name type="ordered locus">BH0146</name>
</gene>
<sequence length="179" mass="20119">MNRLKEKYQKEIVPSLTEKFNYSSVMAVPKLEKIVVNMGVGDAVQNAKALDKAVEELTEITGQKPIITKAKKSIAGFKLREGMPIGAKVTLRGERMYEFLDKLISVSLPRVRDFRGISKKAFDGRGNYTLGVKEQLIFPEIDYDKVDKVRGMDVVIVTTASTDEEARELLSQMGMPFQK</sequence>